<gene>
    <name type="primary">MED20</name>
    <name type="synonym">TRFP</name>
    <name type="ORF">RCJMB04_8k10</name>
</gene>
<accession>Q5ZKY9</accession>
<evidence type="ECO:0000250" key="1"/>
<evidence type="ECO:0000305" key="2"/>
<name>MED20_CHICK</name>
<protein>
    <recommendedName>
        <fullName>Mediator of RNA polymerase II transcription subunit 20</fullName>
    </recommendedName>
    <alternativeName>
        <fullName>Mediator complex subunit 20</fullName>
    </alternativeName>
    <alternativeName>
        <fullName>TRF-proximal protein homolog</fullName>
    </alternativeName>
</protein>
<keyword id="KW-0010">Activator</keyword>
<keyword id="KW-0539">Nucleus</keyword>
<keyword id="KW-1185">Reference proteome</keyword>
<keyword id="KW-0804">Transcription</keyword>
<keyword id="KW-0805">Transcription regulation</keyword>
<feature type="chain" id="PRO_0000308556" description="Mediator of RNA polymerase II transcription subunit 20">
    <location>
        <begin position="1"/>
        <end position="211"/>
    </location>
</feature>
<reference key="1">
    <citation type="journal article" date="2005" name="Genome Biol.">
        <title>Full-length cDNAs from chicken bursal lymphocytes to facilitate gene function analysis.</title>
        <authorList>
            <person name="Caldwell R.B."/>
            <person name="Kierzek A.M."/>
            <person name="Arakawa H."/>
            <person name="Bezzubov Y."/>
            <person name="Zaim J."/>
            <person name="Fiedler P."/>
            <person name="Kutter S."/>
            <person name="Blagodatski A."/>
            <person name="Kostovska D."/>
            <person name="Koter M."/>
            <person name="Plachy J."/>
            <person name="Carninci P."/>
            <person name="Hayashizaki Y."/>
            <person name="Buerstedde J.-M."/>
        </authorList>
    </citation>
    <scope>NUCLEOTIDE SEQUENCE [LARGE SCALE MRNA]</scope>
    <source>
        <strain>CB</strain>
        <tissue>Bursa of Fabricius</tissue>
    </source>
</reference>
<proteinExistence type="evidence at transcript level"/>
<organism>
    <name type="scientific">Gallus gallus</name>
    <name type="common">Chicken</name>
    <dbReference type="NCBI Taxonomy" id="9031"/>
    <lineage>
        <taxon>Eukaryota</taxon>
        <taxon>Metazoa</taxon>
        <taxon>Chordata</taxon>
        <taxon>Craniata</taxon>
        <taxon>Vertebrata</taxon>
        <taxon>Euteleostomi</taxon>
        <taxon>Archelosauria</taxon>
        <taxon>Archosauria</taxon>
        <taxon>Dinosauria</taxon>
        <taxon>Saurischia</taxon>
        <taxon>Theropoda</taxon>
        <taxon>Coelurosauria</taxon>
        <taxon>Aves</taxon>
        <taxon>Neognathae</taxon>
        <taxon>Galloanserae</taxon>
        <taxon>Galliformes</taxon>
        <taxon>Phasianidae</taxon>
        <taxon>Phasianinae</taxon>
        <taxon>Gallus</taxon>
    </lineage>
</organism>
<dbReference type="EMBL" id="AJ719945">
    <property type="protein sequence ID" value="CAG31604.1"/>
    <property type="molecule type" value="mRNA"/>
</dbReference>
<dbReference type="RefSeq" id="NP_001006327.1">
    <property type="nucleotide sequence ID" value="NM_001006327.3"/>
</dbReference>
<dbReference type="SMR" id="Q5ZKY9"/>
<dbReference type="FunCoup" id="Q5ZKY9">
    <property type="interactions" value="2180"/>
</dbReference>
<dbReference type="STRING" id="9031.ENSGALP00000005490"/>
<dbReference type="PaxDb" id="9031-ENSGALP00000005490"/>
<dbReference type="GeneID" id="419926"/>
<dbReference type="KEGG" id="gga:419926"/>
<dbReference type="CTD" id="9477"/>
<dbReference type="VEuPathDB" id="HostDB:geneid_419926"/>
<dbReference type="eggNOG" id="KOG4309">
    <property type="taxonomic scope" value="Eukaryota"/>
</dbReference>
<dbReference type="HOGENOM" id="CLU_080044_1_0_1"/>
<dbReference type="InParanoid" id="Q5ZKY9"/>
<dbReference type="OMA" id="FFVDCET"/>
<dbReference type="OrthoDB" id="1854899at2759"/>
<dbReference type="PhylomeDB" id="Q5ZKY9"/>
<dbReference type="TreeFam" id="TF315156"/>
<dbReference type="Reactome" id="R-GGA-212436">
    <property type="pathway name" value="Generic Transcription Pathway"/>
</dbReference>
<dbReference type="Reactome" id="R-GGA-9841922">
    <property type="pathway name" value="MLL4 and MLL3 complexes regulate expression of PPARG target genes in adipogenesis and hepatic steatosis"/>
</dbReference>
<dbReference type="PRO" id="PR:Q5ZKY9"/>
<dbReference type="Proteomes" id="UP000000539">
    <property type="component" value="Chromosome 26"/>
</dbReference>
<dbReference type="Bgee" id="ENSGALG00000003474">
    <property type="expression patterns" value="Expressed in heart and 12 other cell types or tissues"/>
</dbReference>
<dbReference type="GO" id="GO:0016592">
    <property type="term" value="C:mediator complex"/>
    <property type="evidence" value="ECO:0000318"/>
    <property type="project" value="GO_Central"/>
</dbReference>
<dbReference type="GO" id="GO:0003713">
    <property type="term" value="F:transcription coactivator activity"/>
    <property type="evidence" value="ECO:0000318"/>
    <property type="project" value="GO_Central"/>
</dbReference>
<dbReference type="GO" id="GO:0006357">
    <property type="term" value="P:regulation of transcription by RNA polymerase II"/>
    <property type="evidence" value="ECO:0000318"/>
    <property type="project" value="GO_Central"/>
</dbReference>
<dbReference type="InterPro" id="IPR013921">
    <property type="entry name" value="Mediator_Med20"/>
</dbReference>
<dbReference type="PANTHER" id="PTHR12465:SF0">
    <property type="entry name" value="MEDIATOR OF RNA POLYMERASE II TRANSCRIPTION SUBUNIT 20"/>
    <property type="match status" value="1"/>
</dbReference>
<dbReference type="PANTHER" id="PTHR12465">
    <property type="entry name" value="UBIQUITIN SPECIFIC PROTEASE HOMOLOG 49"/>
    <property type="match status" value="1"/>
</dbReference>
<dbReference type="Pfam" id="PF08612">
    <property type="entry name" value="Med20"/>
    <property type="match status" value="1"/>
</dbReference>
<comment type="function">
    <text evidence="1">Component of the Mediator complex, a coactivator involved in the regulated transcription of nearly all RNA polymerase II-dependent genes. Mediator functions as a bridge to convey information from gene-specific regulatory proteins to the basal RNA polymerase II transcription machinery. Mediator is recruited to promoters by direct interactions with regulatory proteins and serves as a scaffold for the assembly of a functional preinitiation complex with RNA polymerase II and the general transcription factors (By similarity).</text>
</comment>
<comment type="subunit">
    <text evidence="1">Component of the Mediator complex.</text>
</comment>
<comment type="subcellular location">
    <subcellularLocation>
        <location evidence="2">Nucleus</location>
    </subcellularLocation>
</comment>
<comment type="similarity">
    <text evidence="2">Belongs to the Mediator complex subunit 20 family.</text>
</comment>
<sequence>MGVTCVTQVPVLEGKSVQQTVELLSKKLELLGAEKHGAFGVDCETYHTAAAISSQGQTGKLMYVMHNSEYPLSCFALFENGPCLIADANFDTLMVKLKGFFQNAKANKIESRGTRYQYCDFLVKVGTVTMGPSARGISVEVEYCPCVIANDCWNLLMEFMQSFMGSHTPGIPSVFGTKHDSIYSPADTMVQYMELFNKIRKQQQVPVAGIR</sequence>